<feature type="chain" id="PRO_0000154351" description="N-(5'-phosphoribosyl)anthranilate isomerase">
    <location>
        <begin position="1"/>
        <end position="219"/>
    </location>
</feature>
<sequence>MSISAHGAKICGLSTPETVKAAFDGAAAFLGFVFFDKSPRNVAPEVAARLVEPVRGRGVQTVAVTVDPDDALIDRLMATMRPDLIQVHGKETPSRVREIAARAGVGVIKAFSVSSSADVDQAAAFDGVAQHLMFDARPVEGSVLPGGTGARFDWGLLAGRRFSRPHFLAGGLDPWNVGEAIKTSGTPLVDVSSGVERGPGLKDPALISAFLDAVKRAKD</sequence>
<name>TRPF_CAUVC</name>
<evidence type="ECO:0000305" key="1"/>
<keyword id="KW-0028">Amino-acid biosynthesis</keyword>
<keyword id="KW-0057">Aromatic amino acid biosynthesis</keyword>
<keyword id="KW-0413">Isomerase</keyword>
<keyword id="KW-1185">Reference proteome</keyword>
<keyword id="KW-0822">Tryptophan biosynthesis</keyword>
<gene>
    <name type="primary">trpF</name>
    <name type="ordered locus">CC_3545</name>
</gene>
<comment type="catalytic activity">
    <reaction>
        <text>N-(5-phospho-beta-D-ribosyl)anthranilate = 1-(2-carboxyphenylamino)-1-deoxy-D-ribulose 5-phosphate</text>
        <dbReference type="Rhea" id="RHEA:21540"/>
        <dbReference type="ChEBI" id="CHEBI:18277"/>
        <dbReference type="ChEBI" id="CHEBI:58613"/>
        <dbReference type="EC" id="5.3.1.24"/>
    </reaction>
</comment>
<comment type="pathway">
    <text>Amino-acid biosynthesis; L-tryptophan biosynthesis; L-tryptophan from chorismate: step 3/5.</text>
</comment>
<comment type="similarity">
    <text evidence="1">Belongs to the TrpF family.</text>
</comment>
<protein>
    <recommendedName>
        <fullName>N-(5'-phosphoribosyl)anthranilate isomerase</fullName>
        <shortName>PRAI</shortName>
        <ecNumber>5.3.1.24</ecNumber>
    </recommendedName>
</protein>
<dbReference type="EC" id="5.3.1.24"/>
<dbReference type="EMBL" id="M19129">
    <property type="protein sequence ID" value="AAA23056.1"/>
    <property type="molecule type" value="Genomic_DNA"/>
</dbReference>
<dbReference type="EMBL" id="AE005673">
    <property type="protein sequence ID" value="AAK25507.1"/>
    <property type="molecule type" value="Genomic_DNA"/>
</dbReference>
<dbReference type="PIR" id="B43664">
    <property type="entry name" value="B43664"/>
</dbReference>
<dbReference type="RefSeq" id="NP_422339.1">
    <property type="nucleotide sequence ID" value="NC_002696.2"/>
</dbReference>
<dbReference type="RefSeq" id="WP_010921374.1">
    <property type="nucleotide sequence ID" value="NC_002696.2"/>
</dbReference>
<dbReference type="SMR" id="P12289"/>
<dbReference type="STRING" id="190650.CC_3545"/>
<dbReference type="EnsemblBacteria" id="AAK25507">
    <property type="protein sequence ID" value="AAK25507"/>
    <property type="gene ID" value="CC_3545"/>
</dbReference>
<dbReference type="KEGG" id="ccr:CC_3545"/>
<dbReference type="PATRIC" id="fig|190650.5.peg.3550"/>
<dbReference type="eggNOG" id="COG0135">
    <property type="taxonomic scope" value="Bacteria"/>
</dbReference>
<dbReference type="HOGENOM" id="CLU_076364_1_1_5"/>
<dbReference type="BioCyc" id="CAULO:CC3545-MONOMER"/>
<dbReference type="UniPathway" id="UPA00035">
    <property type="reaction ID" value="UER00042"/>
</dbReference>
<dbReference type="Proteomes" id="UP000001816">
    <property type="component" value="Chromosome"/>
</dbReference>
<dbReference type="GO" id="GO:0004640">
    <property type="term" value="F:phosphoribosylanthranilate isomerase activity"/>
    <property type="evidence" value="ECO:0007669"/>
    <property type="project" value="UniProtKB-UniRule"/>
</dbReference>
<dbReference type="GO" id="GO:0000162">
    <property type="term" value="P:L-tryptophan biosynthetic process"/>
    <property type="evidence" value="ECO:0007669"/>
    <property type="project" value="UniProtKB-UniRule"/>
</dbReference>
<dbReference type="CDD" id="cd00405">
    <property type="entry name" value="PRAI"/>
    <property type="match status" value="1"/>
</dbReference>
<dbReference type="Gene3D" id="3.20.20.70">
    <property type="entry name" value="Aldolase class I"/>
    <property type="match status" value="1"/>
</dbReference>
<dbReference type="HAMAP" id="MF_00135">
    <property type="entry name" value="PRAI"/>
    <property type="match status" value="1"/>
</dbReference>
<dbReference type="InterPro" id="IPR013785">
    <property type="entry name" value="Aldolase_TIM"/>
</dbReference>
<dbReference type="InterPro" id="IPR001240">
    <property type="entry name" value="PRAI_dom"/>
</dbReference>
<dbReference type="InterPro" id="IPR011060">
    <property type="entry name" value="RibuloseP-bd_barrel"/>
</dbReference>
<dbReference type="InterPro" id="IPR044643">
    <property type="entry name" value="TrpF_fam"/>
</dbReference>
<dbReference type="NCBIfam" id="NF002295">
    <property type="entry name" value="PRK01222.1-1"/>
    <property type="match status" value="1"/>
</dbReference>
<dbReference type="PANTHER" id="PTHR42894">
    <property type="entry name" value="N-(5'-PHOSPHORIBOSYL)ANTHRANILATE ISOMERASE"/>
    <property type="match status" value="1"/>
</dbReference>
<dbReference type="PANTHER" id="PTHR42894:SF1">
    <property type="entry name" value="N-(5'-PHOSPHORIBOSYL)ANTHRANILATE ISOMERASE"/>
    <property type="match status" value="1"/>
</dbReference>
<dbReference type="Pfam" id="PF00697">
    <property type="entry name" value="PRAI"/>
    <property type="match status" value="1"/>
</dbReference>
<dbReference type="SUPFAM" id="SSF51366">
    <property type="entry name" value="Ribulose-phoshate binding barrel"/>
    <property type="match status" value="1"/>
</dbReference>
<accession>P12289</accession>
<organism>
    <name type="scientific">Caulobacter vibrioides (strain ATCC 19089 / CIP 103742 / CB 15)</name>
    <name type="common">Caulobacter crescentus</name>
    <dbReference type="NCBI Taxonomy" id="190650"/>
    <lineage>
        <taxon>Bacteria</taxon>
        <taxon>Pseudomonadati</taxon>
        <taxon>Pseudomonadota</taxon>
        <taxon>Alphaproteobacteria</taxon>
        <taxon>Caulobacterales</taxon>
        <taxon>Caulobacteraceae</taxon>
        <taxon>Caulobacter</taxon>
    </lineage>
</organism>
<reference key="1">
    <citation type="journal article" date="1988" name="J. Bacteriol.">
        <title>Structure of the Caulobacter crescentus trpFBA operon.</title>
        <authorList>
            <person name="Ross C.M."/>
            <person name="Winkler M.E."/>
        </authorList>
    </citation>
    <scope>NUCLEOTIDE SEQUENCE [GENOMIC DNA]</scope>
    <source>
        <strain>ATCC 19089 / CIP 103742 / CB 15</strain>
    </source>
</reference>
<reference key="2">
    <citation type="journal article" date="2001" name="Proc. Natl. Acad. Sci. U.S.A.">
        <title>Complete genome sequence of Caulobacter crescentus.</title>
        <authorList>
            <person name="Nierman W.C."/>
            <person name="Feldblyum T.V."/>
            <person name="Laub M.T."/>
            <person name="Paulsen I.T."/>
            <person name="Nelson K.E."/>
            <person name="Eisen J.A."/>
            <person name="Heidelberg J.F."/>
            <person name="Alley M.R.K."/>
            <person name="Ohta N."/>
            <person name="Maddock J.R."/>
            <person name="Potocka I."/>
            <person name="Nelson W.C."/>
            <person name="Newton A."/>
            <person name="Stephens C."/>
            <person name="Phadke N.D."/>
            <person name="Ely B."/>
            <person name="DeBoy R.T."/>
            <person name="Dodson R.J."/>
            <person name="Durkin A.S."/>
            <person name="Gwinn M.L."/>
            <person name="Haft D.H."/>
            <person name="Kolonay J.F."/>
            <person name="Smit J."/>
            <person name="Craven M.B."/>
            <person name="Khouri H.M."/>
            <person name="Shetty J."/>
            <person name="Berry K.J."/>
            <person name="Utterback T.R."/>
            <person name="Tran K."/>
            <person name="Wolf A.M."/>
            <person name="Vamathevan J.J."/>
            <person name="Ermolaeva M.D."/>
            <person name="White O."/>
            <person name="Salzberg S.L."/>
            <person name="Venter J.C."/>
            <person name="Shapiro L."/>
            <person name="Fraser C.M."/>
        </authorList>
    </citation>
    <scope>NUCLEOTIDE SEQUENCE [LARGE SCALE GENOMIC DNA]</scope>
    <source>
        <strain>ATCC 19089 / CIP 103742 / CB 15</strain>
    </source>
</reference>
<proteinExistence type="inferred from homology"/>